<gene>
    <name type="primary">SH</name>
</gene>
<name>SH_MUMPK</name>
<comment type="function">
    <text evidence="2">Plays a role in the inhibition of the host NF-kappa-B pathway. This inhibition occurs at the receptor level, by preventing the signaling of TNFR1 as well as IL-1R and TLR3.</text>
</comment>
<comment type="subunit">
    <text evidence="1 2">Interacts with host TNFRSF1A, RIPK1 and IRAK1; these interactions interfere with host NF-kappa-B activation at the level of receptor complexes (By similarity). Interacts with host protein UBQLN4 (By similarity).</text>
</comment>
<comment type="subcellular location">
    <subcellularLocation>
        <location evidence="2">Virion membrane</location>
        <topology evidence="2">Single-pass membrane protein</topology>
    </subcellularLocation>
    <subcellularLocation>
        <location evidence="2">Host cell membrane</location>
        <topology evidence="2">Single-pass membrane protein</topology>
    </subcellularLocation>
</comment>
<comment type="similarity">
    <text evidence="4">Belongs to the rubulavirus small hydrophobic protein family.</text>
</comment>
<sequence>MPAIQPPLYLTFLLLILLYLIITLYVWTILTITYKTTVRYAALYQRSFSRWGFDQSL</sequence>
<evidence type="ECO:0000250" key="1">
    <source>
        <dbReference type="UniProtKB" id="P22110"/>
    </source>
</evidence>
<evidence type="ECO:0000250" key="2">
    <source>
        <dbReference type="UniProtKB" id="P22112"/>
    </source>
</evidence>
<evidence type="ECO:0000255" key="3"/>
<evidence type="ECO:0000305" key="4"/>
<accession>P28086</accession>
<reference key="1">
    <citation type="journal article" date="1993" name="Arch. Virol.">
        <title>Identification of a new mumps virus lineage by nucleotide sequence analysis of the SH gene of ten different strains.</title>
        <authorList>
            <person name="Yeo R.P."/>
            <person name="Afzal M.A."/>
            <person name="Forsey T."/>
            <person name="Rima B.K."/>
        </authorList>
    </citation>
    <scope>NUCLEOTIDE SEQUENCE [GENOMIC RNA]</scope>
</reference>
<dbReference type="EMBL" id="X63706">
    <property type="protein sequence ID" value="CAA45237.1"/>
    <property type="molecule type" value="Genomic_RNA"/>
</dbReference>
<dbReference type="PIR" id="S24825">
    <property type="entry name" value="S24825"/>
</dbReference>
<dbReference type="SMR" id="P28086"/>
<dbReference type="GO" id="GO:0020002">
    <property type="term" value="C:host cell plasma membrane"/>
    <property type="evidence" value="ECO:0007669"/>
    <property type="project" value="UniProtKB-SubCell"/>
</dbReference>
<dbReference type="GO" id="GO:0016020">
    <property type="term" value="C:membrane"/>
    <property type="evidence" value="ECO:0007669"/>
    <property type="project" value="UniProtKB-KW"/>
</dbReference>
<dbReference type="GO" id="GO:0055036">
    <property type="term" value="C:virion membrane"/>
    <property type="evidence" value="ECO:0007669"/>
    <property type="project" value="UniProtKB-SubCell"/>
</dbReference>
<dbReference type="GO" id="GO:0085034">
    <property type="term" value="P:symbiont-mediated suppression of host NF-kappaB cascade"/>
    <property type="evidence" value="ECO:0007669"/>
    <property type="project" value="UniProtKB-KW"/>
</dbReference>
<dbReference type="InterPro" id="IPR001477">
    <property type="entry name" value="SH"/>
</dbReference>
<dbReference type="Pfam" id="PF01445">
    <property type="entry name" value="SH"/>
    <property type="match status" value="1"/>
</dbReference>
<dbReference type="PIRSF" id="PIRSF003923">
    <property type="entry name" value="SH"/>
    <property type="match status" value="1"/>
</dbReference>
<organismHost>
    <name type="scientific">Homo sapiens</name>
    <name type="common">Human</name>
    <dbReference type="NCBI Taxonomy" id="9606"/>
</organismHost>
<feature type="chain" id="PRO_0000142879" description="Small hydrophobic protein">
    <location>
        <begin position="1"/>
        <end position="57"/>
    </location>
</feature>
<feature type="topological domain" description="Virion surface" evidence="3">
    <location>
        <begin position="1"/>
        <end position="8"/>
    </location>
</feature>
<feature type="transmembrane region" description="Helical" evidence="3">
    <location>
        <begin position="9"/>
        <end position="29"/>
    </location>
</feature>
<feature type="topological domain" description="Intravirion" evidence="3">
    <location>
        <begin position="30"/>
        <end position="57"/>
    </location>
</feature>
<protein>
    <recommendedName>
        <fullName>Small hydrophobic protein</fullName>
    </recommendedName>
</protein>
<proteinExistence type="inferred from homology"/>
<organism>
    <name type="scientific">Mumps virus (strain Kilham)</name>
    <name type="common">MuV</name>
    <dbReference type="NCBI Taxonomy" id="11169"/>
    <lineage>
        <taxon>Viruses</taxon>
        <taxon>Riboviria</taxon>
        <taxon>Orthornavirae</taxon>
        <taxon>Negarnaviricota</taxon>
        <taxon>Haploviricotina</taxon>
        <taxon>Monjiviricetes</taxon>
        <taxon>Mononegavirales</taxon>
        <taxon>Paramyxoviridae</taxon>
        <taxon>Rubulavirinae</taxon>
        <taxon>Orthorubulavirus</taxon>
        <taxon>Orthorubulavirus parotitidis</taxon>
        <taxon>Mumps orthorubulavirus</taxon>
    </lineage>
</organism>
<keyword id="KW-1032">Host cell membrane</keyword>
<keyword id="KW-1043">Host membrane</keyword>
<keyword id="KW-0945">Host-virus interaction</keyword>
<keyword id="KW-1100">Inhibition of host NF-kappa-B by virus</keyword>
<keyword id="KW-0472">Membrane</keyword>
<keyword id="KW-0812">Transmembrane</keyword>
<keyword id="KW-1133">Transmembrane helix</keyword>
<keyword id="KW-0946">Virion</keyword>